<comment type="function">
    <text evidence="1">This protein is one of the two subunits of integration host factor, a specific DNA-binding protein that functions in genetic recombination as well as in transcriptional and translational control.</text>
</comment>
<comment type="subunit">
    <text evidence="1">Heterodimer of an alpha and a beta chain.</text>
</comment>
<comment type="similarity">
    <text evidence="1">Belongs to the bacterial histone-like protein family.</text>
</comment>
<feature type="chain" id="PRO_1000122188" description="Integration host factor subunit beta">
    <location>
        <begin position="1"/>
        <end position="107"/>
    </location>
</feature>
<feature type="region of interest" description="Disordered" evidence="2">
    <location>
        <begin position="76"/>
        <end position="107"/>
    </location>
</feature>
<feature type="compositionally biased region" description="Basic and acidic residues" evidence="2">
    <location>
        <begin position="82"/>
        <end position="101"/>
    </location>
</feature>
<protein>
    <recommendedName>
        <fullName evidence="1">Integration host factor subunit beta</fullName>
        <shortName evidence="1">IHF-beta</shortName>
    </recommendedName>
</protein>
<evidence type="ECO:0000255" key="1">
    <source>
        <dbReference type="HAMAP-Rule" id="MF_00381"/>
    </source>
</evidence>
<evidence type="ECO:0000256" key="2">
    <source>
        <dbReference type="SAM" id="MobiDB-lite"/>
    </source>
</evidence>
<gene>
    <name evidence="1" type="primary">ihfB</name>
    <name evidence="1" type="synonym">himD</name>
    <name type="ordered locus">Bcen_0569</name>
</gene>
<organism>
    <name type="scientific">Burkholderia orbicola (strain AU 1054)</name>
    <dbReference type="NCBI Taxonomy" id="331271"/>
    <lineage>
        <taxon>Bacteria</taxon>
        <taxon>Pseudomonadati</taxon>
        <taxon>Pseudomonadota</taxon>
        <taxon>Betaproteobacteria</taxon>
        <taxon>Burkholderiales</taxon>
        <taxon>Burkholderiaceae</taxon>
        <taxon>Burkholderia</taxon>
        <taxon>Burkholderia cepacia complex</taxon>
        <taxon>Burkholderia orbicola</taxon>
    </lineage>
</organism>
<accession>Q1BY25</accession>
<sequence>MTKSELVAQLASRFPQLVLKDADFAVKTMLDAMSDALAKGHRIEIRGFGSFGLNRRPARVGRNPKSGEKVQVPEKFVPHFKPGKELRERVDGRAGEPLKADDPDDDR</sequence>
<proteinExistence type="inferred from homology"/>
<keyword id="KW-0233">DNA recombination</keyword>
<keyword id="KW-0238">DNA-binding</keyword>
<keyword id="KW-0804">Transcription</keyword>
<keyword id="KW-0805">Transcription regulation</keyword>
<keyword id="KW-0810">Translation regulation</keyword>
<name>IHFB_BURO1</name>
<dbReference type="EMBL" id="CP000378">
    <property type="protein sequence ID" value="ABF75480.1"/>
    <property type="molecule type" value="Genomic_DNA"/>
</dbReference>
<dbReference type="SMR" id="Q1BY25"/>
<dbReference type="HOGENOM" id="CLU_105066_2_0_4"/>
<dbReference type="GO" id="GO:0005694">
    <property type="term" value="C:chromosome"/>
    <property type="evidence" value="ECO:0007669"/>
    <property type="project" value="InterPro"/>
</dbReference>
<dbReference type="GO" id="GO:0005829">
    <property type="term" value="C:cytosol"/>
    <property type="evidence" value="ECO:0007669"/>
    <property type="project" value="TreeGrafter"/>
</dbReference>
<dbReference type="GO" id="GO:0003677">
    <property type="term" value="F:DNA binding"/>
    <property type="evidence" value="ECO:0007669"/>
    <property type="project" value="UniProtKB-UniRule"/>
</dbReference>
<dbReference type="GO" id="GO:0030527">
    <property type="term" value="F:structural constituent of chromatin"/>
    <property type="evidence" value="ECO:0007669"/>
    <property type="project" value="InterPro"/>
</dbReference>
<dbReference type="GO" id="GO:0006310">
    <property type="term" value="P:DNA recombination"/>
    <property type="evidence" value="ECO:0007669"/>
    <property type="project" value="UniProtKB-UniRule"/>
</dbReference>
<dbReference type="GO" id="GO:0006355">
    <property type="term" value="P:regulation of DNA-templated transcription"/>
    <property type="evidence" value="ECO:0007669"/>
    <property type="project" value="UniProtKB-UniRule"/>
</dbReference>
<dbReference type="GO" id="GO:0006417">
    <property type="term" value="P:regulation of translation"/>
    <property type="evidence" value="ECO:0007669"/>
    <property type="project" value="UniProtKB-UniRule"/>
</dbReference>
<dbReference type="CDD" id="cd13836">
    <property type="entry name" value="IHF_B"/>
    <property type="match status" value="1"/>
</dbReference>
<dbReference type="Gene3D" id="4.10.520.10">
    <property type="entry name" value="IHF-like DNA-binding proteins"/>
    <property type="match status" value="1"/>
</dbReference>
<dbReference type="HAMAP" id="MF_00381">
    <property type="entry name" value="IHF_beta"/>
    <property type="match status" value="1"/>
</dbReference>
<dbReference type="InterPro" id="IPR000119">
    <property type="entry name" value="Hist_DNA-bd"/>
</dbReference>
<dbReference type="InterPro" id="IPR010992">
    <property type="entry name" value="IHF-like_DNA-bd_dom_sf"/>
</dbReference>
<dbReference type="InterPro" id="IPR005685">
    <property type="entry name" value="IHF_beta"/>
</dbReference>
<dbReference type="NCBIfam" id="TIGR00988">
    <property type="entry name" value="hip"/>
    <property type="match status" value="1"/>
</dbReference>
<dbReference type="NCBIfam" id="NF001222">
    <property type="entry name" value="PRK00199.1"/>
    <property type="match status" value="1"/>
</dbReference>
<dbReference type="PANTHER" id="PTHR33175">
    <property type="entry name" value="DNA-BINDING PROTEIN HU"/>
    <property type="match status" value="1"/>
</dbReference>
<dbReference type="PANTHER" id="PTHR33175:SF5">
    <property type="entry name" value="INTEGRATION HOST FACTOR SUBUNIT BETA"/>
    <property type="match status" value="1"/>
</dbReference>
<dbReference type="Pfam" id="PF00216">
    <property type="entry name" value="Bac_DNA_binding"/>
    <property type="match status" value="1"/>
</dbReference>
<dbReference type="PRINTS" id="PR01727">
    <property type="entry name" value="DNABINDINGHU"/>
</dbReference>
<dbReference type="SMART" id="SM00411">
    <property type="entry name" value="BHL"/>
    <property type="match status" value="1"/>
</dbReference>
<dbReference type="SUPFAM" id="SSF47729">
    <property type="entry name" value="IHF-like DNA-binding proteins"/>
    <property type="match status" value="1"/>
</dbReference>
<reference key="1">
    <citation type="submission" date="2006-05" db="EMBL/GenBank/DDBJ databases">
        <title>Complete sequence of chromosome 1 of Burkholderia cenocepacia AU 1054.</title>
        <authorList>
            <consortium name="US DOE Joint Genome Institute"/>
            <person name="Copeland A."/>
            <person name="Lucas S."/>
            <person name="Lapidus A."/>
            <person name="Barry K."/>
            <person name="Detter J.C."/>
            <person name="Glavina del Rio T."/>
            <person name="Hammon N."/>
            <person name="Israni S."/>
            <person name="Dalin E."/>
            <person name="Tice H."/>
            <person name="Pitluck S."/>
            <person name="Chain P."/>
            <person name="Malfatti S."/>
            <person name="Shin M."/>
            <person name="Vergez L."/>
            <person name="Schmutz J."/>
            <person name="Larimer F."/>
            <person name="Land M."/>
            <person name="Hauser L."/>
            <person name="Kyrpides N."/>
            <person name="Lykidis A."/>
            <person name="LiPuma J.J."/>
            <person name="Konstantinidis K."/>
            <person name="Tiedje J.M."/>
            <person name="Richardson P."/>
        </authorList>
    </citation>
    <scope>NUCLEOTIDE SEQUENCE [LARGE SCALE GENOMIC DNA]</scope>
    <source>
        <strain>AU 1054</strain>
    </source>
</reference>